<evidence type="ECO:0000255" key="1">
    <source>
        <dbReference type="HAMAP-Rule" id="MF_00203"/>
    </source>
</evidence>
<reference key="1">
    <citation type="journal article" date="1995" name="Science">
        <title>Whole-genome random sequencing and assembly of Haemophilus influenzae Rd.</title>
        <authorList>
            <person name="Fleischmann R.D."/>
            <person name="Adams M.D."/>
            <person name="White O."/>
            <person name="Clayton R.A."/>
            <person name="Kirkness E.F."/>
            <person name="Kerlavage A.R."/>
            <person name="Bult C.J."/>
            <person name="Tomb J.-F."/>
            <person name="Dougherty B.A."/>
            <person name="Merrick J.M."/>
            <person name="McKenney K."/>
            <person name="Sutton G.G."/>
            <person name="FitzHugh W."/>
            <person name="Fields C.A."/>
            <person name="Gocayne J.D."/>
            <person name="Scott J.D."/>
            <person name="Shirley R."/>
            <person name="Liu L.-I."/>
            <person name="Glodek A."/>
            <person name="Kelley J.M."/>
            <person name="Weidman J.F."/>
            <person name="Phillips C.A."/>
            <person name="Spriggs T."/>
            <person name="Hedblom E."/>
            <person name="Cotton M.D."/>
            <person name="Utterback T.R."/>
            <person name="Hanna M.C."/>
            <person name="Nguyen D.T."/>
            <person name="Saudek D.M."/>
            <person name="Brandon R.C."/>
            <person name="Fine L.D."/>
            <person name="Fritchman J.L."/>
            <person name="Fuhrmann J.L."/>
            <person name="Geoghagen N.S.M."/>
            <person name="Gnehm C.L."/>
            <person name="McDonald L.A."/>
            <person name="Small K.V."/>
            <person name="Fraser C.M."/>
            <person name="Smith H.O."/>
            <person name="Venter J.C."/>
        </authorList>
    </citation>
    <scope>NUCLEOTIDE SEQUENCE [LARGE SCALE GENOMIC DNA]</scope>
    <source>
        <strain>ATCC 51907 / DSM 11121 / KW20 / Rd</strain>
    </source>
</reference>
<keyword id="KW-0963">Cytoplasm</keyword>
<keyword id="KW-0227">DNA damage</keyword>
<keyword id="KW-0228">DNA excision</keyword>
<keyword id="KW-0234">DNA repair</keyword>
<keyword id="KW-0267">Excision nuclease</keyword>
<keyword id="KW-1185">Reference proteome</keyword>
<keyword id="KW-0742">SOS response</keyword>
<protein>
    <recommendedName>
        <fullName evidence="1">UvrABC system protein C</fullName>
        <shortName evidence="1">Protein UvrC</shortName>
    </recommendedName>
    <alternativeName>
        <fullName evidence="1">Excinuclease ABC subunit C</fullName>
    </alternativeName>
</protein>
<comment type="function">
    <text evidence="1">The UvrABC repair system catalyzes the recognition and processing of DNA lesions. UvrC both incises the 5' and 3' sides of the lesion. The N-terminal half is responsible for the 3' incision and the C-terminal half is responsible for the 5' incision.</text>
</comment>
<comment type="subunit">
    <text evidence="1">Interacts with UvrB in an incision complex.</text>
</comment>
<comment type="subcellular location">
    <subcellularLocation>
        <location evidence="1">Cytoplasm</location>
    </subcellularLocation>
</comment>
<comment type="similarity">
    <text evidence="1">Belongs to the UvrC family.</text>
</comment>
<sequence>MFDAKKFLTDVSHEPGVYRMYDDKDQVIYVGKAKDLKKRLSSYFRKNLSSKKTEALVASIHHIDTTLTSSETEALLLEHNFIKLYQPRYNVLLRDDKSYPFILLTKERHQRITSYRGSKKFAGEYFGPYPHAGAVRETLSLLQKLFPVRQCENSVYSNRSRPCLQYQIGRCSAPCVQGYVSDEEYNQQVELARLFLQGKDQQVLDYLIGKMEQASRNLDFEQAARYRDQIQAVRSVIEKQFVSNERLDDMDIMSIAYQHGLACVQVMFIRQGKVLGNRSYFPKVPANTDLSELTETFVGQFYLQGHQGRSIPNSIIVDRQLAEKSELEQLLSEQAGRKVTIQESVKGDKSKYLQLAQVNAKAALNVQLKQSSRMSERYQALCDLLNLPKIKRMECFDISHTMGNQTVASCVVFNKEGPLKSDYRRFNIEGITGGDDYAAMEQVLQKRYERDLEEDKIPDIIFIDGGKGQLNRALNVFQHLQVKWDKNRPHLIGVAKGVDRRAGQEVLIISKQDREIHLPDDSLALHLIQHIRDESHNHAISGHRKKRQKAFTQSGLETIEGVGAKRRQALLKYLGGLQGVKKATLDEIASVPGISPKLAERIFETLKND</sequence>
<proteinExistence type="inferred from homology"/>
<accession>P44489</accession>
<feature type="chain" id="PRO_0000138304" description="UvrABC system protein C">
    <location>
        <begin position="1"/>
        <end position="609"/>
    </location>
</feature>
<feature type="domain" description="GIY-YIG" evidence="1">
    <location>
        <begin position="13"/>
        <end position="91"/>
    </location>
</feature>
<feature type="domain" description="UVR" evidence="1">
    <location>
        <begin position="201"/>
        <end position="236"/>
    </location>
</feature>
<name>UVRC_HAEIN</name>
<gene>
    <name evidence="1" type="primary">uvrC</name>
    <name type="ordered locus">HI_0057</name>
</gene>
<organism>
    <name type="scientific">Haemophilus influenzae (strain ATCC 51907 / DSM 11121 / KW20 / Rd)</name>
    <dbReference type="NCBI Taxonomy" id="71421"/>
    <lineage>
        <taxon>Bacteria</taxon>
        <taxon>Pseudomonadati</taxon>
        <taxon>Pseudomonadota</taxon>
        <taxon>Gammaproteobacteria</taxon>
        <taxon>Pasteurellales</taxon>
        <taxon>Pasteurellaceae</taxon>
        <taxon>Haemophilus</taxon>
    </lineage>
</organism>
<dbReference type="EMBL" id="L42023">
    <property type="protein sequence ID" value="AAC21735.1"/>
    <property type="molecule type" value="Genomic_DNA"/>
</dbReference>
<dbReference type="PIR" id="F64045">
    <property type="entry name" value="F64045"/>
</dbReference>
<dbReference type="RefSeq" id="NP_438230.1">
    <property type="nucleotide sequence ID" value="NC_000907.1"/>
</dbReference>
<dbReference type="SMR" id="P44489"/>
<dbReference type="STRING" id="71421.HI_0057"/>
<dbReference type="EnsemblBacteria" id="AAC21735">
    <property type="protein sequence ID" value="AAC21735"/>
    <property type="gene ID" value="HI_0057"/>
</dbReference>
<dbReference type="KEGG" id="hin:HI_0057"/>
<dbReference type="PATRIC" id="fig|71421.8.peg.57"/>
<dbReference type="eggNOG" id="COG0322">
    <property type="taxonomic scope" value="Bacteria"/>
</dbReference>
<dbReference type="HOGENOM" id="CLU_014841_3_0_6"/>
<dbReference type="OrthoDB" id="9804933at2"/>
<dbReference type="PhylomeDB" id="P44489"/>
<dbReference type="BioCyc" id="HINF71421:G1GJ1-58-MONOMER"/>
<dbReference type="Proteomes" id="UP000000579">
    <property type="component" value="Chromosome"/>
</dbReference>
<dbReference type="GO" id="GO:0005737">
    <property type="term" value="C:cytoplasm"/>
    <property type="evidence" value="ECO:0007669"/>
    <property type="project" value="UniProtKB-SubCell"/>
</dbReference>
<dbReference type="GO" id="GO:0009380">
    <property type="term" value="C:excinuclease repair complex"/>
    <property type="evidence" value="ECO:0000318"/>
    <property type="project" value="GO_Central"/>
</dbReference>
<dbReference type="GO" id="GO:0003677">
    <property type="term" value="F:DNA binding"/>
    <property type="evidence" value="ECO:0007669"/>
    <property type="project" value="UniProtKB-UniRule"/>
</dbReference>
<dbReference type="GO" id="GO:0009381">
    <property type="term" value="F:excinuclease ABC activity"/>
    <property type="evidence" value="ECO:0007669"/>
    <property type="project" value="UniProtKB-UniRule"/>
</dbReference>
<dbReference type="GO" id="GO:0006974">
    <property type="term" value="P:DNA damage response"/>
    <property type="evidence" value="ECO:0000318"/>
    <property type="project" value="GO_Central"/>
</dbReference>
<dbReference type="GO" id="GO:0006289">
    <property type="term" value="P:nucleotide-excision repair"/>
    <property type="evidence" value="ECO:0007669"/>
    <property type="project" value="UniProtKB-UniRule"/>
</dbReference>
<dbReference type="GO" id="GO:0009432">
    <property type="term" value="P:SOS response"/>
    <property type="evidence" value="ECO:0007669"/>
    <property type="project" value="UniProtKB-UniRule"/>
</dbReference>
<dbReference type="CDD" id="cd10434">
    <property type="entry name" value="GIY-YIG_UvrC_Cho"/>
    <property type="match status" value="1"/>
</dbReference>
<dbReference type="FunFam" id="1.10.150.20:FF:000005">
    <property type="entry name" value="UvrABC system protein C"/>
    <property type="match status" value="1"/>
</dbReference>
<dbReference type="FunFam" id="3.30.420.340:FF:000001">
    <property type="entry name" value="UvrABC system protein C"/>
    <property type="match status" value="1"/>
</dbReference>
<dbReference type="FunFam" id="3.40.1440.10:FF:000001">
    <property type="entry name" value="UvrABC system protein C"/>
    <property type="match status" value="1"/>
</dbReference>
<dbReference type="FunFam" id="4.10.860.10:FF:000002">
    <property type="entry name" value="UvrABC system protein C"/>
    <property type="match status" value="1"/>
</dbReference>
<dbReference type="Gene3D" id="1.10.150.20">
    <property type="entry name" value="5' to 3' exonuclease, C-terminal subdomain"/>
    <property type="match status" value="1"/>
</dbReference>
<dbReference type="Gene3D" id="3.40.1440.10">
    <property type="entry name" value="GIY-YIG endonuclease"/>
    <property type="match status" value="1"/>
</dbReference>
<dbReference type="Gene3D" id="4.10.860.10">
    <property type="entry name" value="UVR domain"/>
    <property type="match status" value="1"/>
</dbReference>
<dbReference type="Gene3D" id="3.30.420.340">
    <property type="entry name" value="UvrC, RNAse H endonuclease domain"/>
    <property type="match status" value="1"/>
</dbReference>
<dbReference type="HAMAP" id="MF_00203">
    <property type="entry name" value="UvrC"/>
    <property type="match status" value="1"/>
</dbReference>
<dbReference type="InterPro" id="IPR000305">
    <property type="entry name" value="GIY-YIG_endonuc"/>
</dbReference>
<dbReference type="InterPro" id="IPR035901">
    <property type="entry name" value="GIY-YIG_endonuc_sf"/>
</dbReference>
<dbReference type="InterPro" id="IPR047296">
    <property type="entry name" value="GIY-YIG_UvrC_Cho"/>
</dbReference>
<dbReference type="InterPro" id="IPR003583">
    <property type="entry name" value="Hlx-hairpin-Hlx_DNA-bd_motif"/>
</dbReference>
<dbReference type="InterPro" id="IPR010994">
    <property type="entry name" value="RuvA_2-like"/>
</dbReference>
<dbReference type="InterPro" id="IPR001943">
    <property type="entry name" value="UVR_dom"/>
</dbReference>
<dbReference type="InterPro" id="IPR036876">
    <property type="entry name" value="UVR_dom_sf"/>
</dbReference>
<dbReference type="InterPro" id="IPR050066">
    <property type="entry name" value="UvrABC_protein_C"/>
</dbReference>
<dbReference type="InterPro" id="IPR004791">
    <property type="entry name" value="UvrC"/>
</dbReference>
<dbReference type="InterPro" id="IPR001162">
    <property type="entry name" value="UvrC_RNase_H_dom"/>
</dbReference>
<dbReference type="InterPro" id="IPR038476">
    <property type="entry name" value="UvrC_RNase_H_dom_sf"/>
</dbReference>
<dbReference type="NCBIfam" id="NF001824">
    <property type="entry name" value="PRK00558.1-5"/>
    <property type="match status" value="1"/>
</dbReference>
<dbReference type="NCBIfam" id="TIGR00194">
    <property type="entry name" value="uvrC"/>
    <property type="match status" value="1"/>
</dbReference>
<dbReference type="PANTHER" id="PTHR30562:SF1">
    <property type="entry name" value="UVRABC SYSTEM PROTEIN C"/>
    <property type="match status" value="1"/>
</dbReference>
<dbReference type="PANTHER" id="PTHR30562">
    <property type="entry name" value="UVRC/OXIDOREDUCTASE"/>
    <property type="match status" value="1"/>
</dbReference>
<dbReference type="Pfam" id="PF01541">
    <property type="entry name" value="GIY-YIG"/>
    <property type="match status" value="1"/>
</dbReference>
<dbReference type="Pfam" id="PF14520">
    <property type="entry name" value="HHH_5"/>
    <property type="match status" value="1"/>
</dbReference>
<dbReference type="Pfam" id="PF02151">
    <property type="entry name" value="UVR"/>
    <property type="match status" value="1"/>
</dbReference>
<dbReference type="Pfam" id="PF22920">
    <property type="entry name" value="UvrC_RNaseH"/>
    <property type="match status" value="1"/>
</dbReference>
<dbReference type="Pfam" id="PF08459">
    <property type="entry name" value="UvrC_RNaseH_dom"/>
    <property type="match status" value="1"/>
</dbReference>
<dbReference type="SMART" id="SM00465">
    <property type="entry name" value="GIYc"/>
    <property type="match status" value="1"/>
</dbReference>
<dbReference type="SMART" id="SM00278">
    <property type="entry name" value="HhH1"/>
    <property type="match status" value="2"/>
</dbReference>
<dbReference type="SUPFAM" id="SSF46600">
    <property type="entry name" value="C-terminal UvrC-binding domain of UvrB"/>
    <property type="match status" value="1"/>
</dbReference>
<dbReference type="SUPFAM" id="SSF82771">
    <property type="entry name" value="GIY-YIG endonuclease"/>
    <property type="match status" value="1"/>
</dbReference>
<dbReference type="SUPFAM" id="SSF47781">
    <property type="entry name" value="RuvA domain 2-like"/>
    <property type="match status" value="1"/>
</dbReference>
<dbReference type="PROSITE" id="PS50164">
    <property type="entry name" value="GIY_YIG"/>
    <property type="match status" value="1"/>
</dbReference>
<dbReference type="PROSITE" id="PS50151">
    <property type="entry name" value="UVR"/>
    <property type="match status" value="1"/>
</dbReference>
<dbReference type="PROSITE" id="PS50165">
    <property type="entry name" value="UVRC"/>
    <property type="match status" value="1"/>
</dbReference>